<comment type="PTM">
    <text evidence="1">Undergoes deimination of some arginine residues (citrullination).</text>
</comment>
<comment type="miscellaneous">
    <text>There are two types of cytoskeletal and microfibrillar keratin: I (acidic; 40-55 kDa) and II (neutral to basic; 56-70 kDa).</text>
</comment>
<comment type="similarity">
    <text evidence="2">Belongs to the intermediate filament family.</text>
</comment>
<accession>Q6IG01</accession>
<organism>
    <name type="scientific">Rattus norvegicus</name>
    <name type="common">Rat</name>
    <dbReference type="NCBI Taxonomy" id="10116"/>
    <lineage>
        <taxon>Eukaryota</taxon>
        <taxon>Metazoa</taxon>
        <taxon>Chordata</taxon>
        <taxon>Craniata</taxon>
        <taxon>Vertebrata</taxon>
        <taxon>Euteleostomi</taxon>
        <taxon>Mammalia</taxon>
        <taxon>Eutheria</taxon>
        <taxon>Euarchontoglires</taxon>
        <taxon>Glires</taxon>
        <taxon>Rodentia</taxon>
        <taxon>Myomorpha</taxon>
        <taxon>Muroidea</taxon>
        <taxon>Muridae</taxon>
        <taxon>Murinae</taxon>
        <taxon>Rattus</taxon>
    </lineage>
</organism>
<proteinExistence type="inferred from homology"/>
<dbReference type="EMBL" id="AABR03056255">
    <property type="status" value="NOT_ANNOTATED_CDS"/>
    <property type="molecule type" value="Genomic_DNA"/>
</dbReference>
<dbReference type="EMBL" id="AABR03057642">
    <property type="status" value="NOT_ANNOTATED_CDS"/>
    <property type="molecule type" value="Genomic_DNA"/>
</dbReference>
<dbReference type="EMBL" id="BK003984">
    <property type="protein sequence ID" value="DAA02229.1"/>
    <property type="molecule type" value="mRNA"/>
</dbReference>
<dbReference type="RefSeq" id="NP_001008807.1">
    <property type="nucleotide sequence ID" value="NM_001008807.1"/>
</dbReference>
<dbReference type="SMR" id="Q6IG01"/>
<dbReference type="FunCoup" id="Q6IG01">
    <property type="interactions" value="15"/>
</dbReference>
<dbReference type="STRING" id="10116.ENSRNOP00000071144"/>
<dbReference type="iPTMnet" id="Q6IG01"/>
<dbReference type="PhosphoSitePlus" id="Q6IG01"/>
<dbReference type="jPOST" id="Q6IG01"/>
<dbReference type="PaxDb" id="10116-ENSRNOP00000052203"/>
<dbReference type="GeneID" id="406226"/>
<dbReference type="KEGG" id="rno:406226"/>
<dbReference type="UCSC" id="RGD:1302968">
    <property type="organism name" value="rat"/>
</dbReference>
<dbReference type="AGR" id="RGD:1302968"/>
<dbReference type="CTD" id="374454"/>
<dbReference type="RGD" id="1302968">
    <property type="gene designation" value="Krt77"/>
</dbReference>
<dbReference type="eggNOG" id="ENOG502QQIF">
    <property type="taxonomic scope" value="Eukaryota"/>
</dbReference>
<dbReference type="HOGENOM" id="CLU_012560_6_1_1"/>
<dbReference type="InParanoid" id="Q6IG01"/>
<dbReference type="PhylomeDB" id="Q6IG01"/>
<dbReference type="Reactome" id="R-RNO-6805567">
    <property type="pathway name" value="Keratinization"/>
</dbReference>
<dbReference type="Reactome" id="R-RNO-6809371">
    <property type="pathway name" value="Formation of the cornified envelope"/>
</dbReference>
<dbReference type="PRO" id="PR:Q6IG01"/>
<dbReference type="Proteomes" id="UP000002494">
    <property type="component" value="Chromosome 7"/>
</dbReference>
<dbReference type="Bgee" id="ENSRNOG00000036865">
    <property type="expression patterns" value="Expressed in heart and 5 other cell types or tissues"/>
</dbReference>
<dbReference type="ExpressionAtlas" id="Q6IG01">
    <property type="expression patterns" value="baseline and differential"/>
</dbReference>
<dbReference type="GO" id="GO:0001533">
    <property type="term" value="C:cornified envelope"/>
    <property type="evidence" value="ECO:0000266"/>
    <property type="project" value="RGD"/>
</dbReference>
<dbReference type="GO" id="GO:0005856">
    <property type="term" value="C:cytoskeleton"/>
    <property type="evidence" value="ECO:0000266"/>
    <property type="project" value="RGD"/>
</dbReference>
<dbReference type="GO" id="GO:0045095">
    <property type="term" value="C:keratin filament"/>
    <property type="evidence" value="ECO:0000318"/>
    <property type="project" value="GO_Central"/>
</dbReference>
<dbReference type="GO" id="GO:0030280">
    <property type="term" value="F:structural constituent of skin epidermis"/>
    <property type="evidence" value="ECO:0000318"/>
    <property type="project" value="GO_Central"/>
</dbReference>
<dbReference type="GO" id="GO:0045109">
    <property type="term" value="P:intermediate filament organization"/>
    <property type="evidence" value="ECO:0000318"/>
    <property type="project" value="GO_Central"/>
</dbReference>
<dbReference type="GO" id="GO:0031424">
    <property type="term" value="P:keratinization"/>
    <property type="evidence" value="ECO:0000318"/>
    <property type="project" value="GO_Central"/>
</dbReference>
<dbReference type="FunFam" id="1.20.5.1160:FF:000001">
    <property type="entry name" value="Keratin type II"/>
    <property type="match status" value="1"/>
</dbReference>
<dbReference type="FunFam" id="1.20.5.170:FF:000065">
    <property type="entry name" value="Keratin, type II cytoskeletal 80"/>
    <property type="match status" value="1"/>
</dbReference>
<dbReference type="FunFam" id="1.20.5.500:FF:000001">
    <property type="entry name" value="Type II keratin 23"/>
    <property type="match status" value="1"/>
</dbReference>
<dbReference type="Gene3D" id="1.20.5.170">
    <property type="match status" value="1"/>
</dbReference>
<dbReference type="Gene3D" id="1.20.5.500">
    <property type="entry name" value="Single helix bin"/>
    <property type="match status" value="1"/>
</dbReference>
<dbReference type="Gene3D" id="1.20.5.1160">
    <property type="entry name" value="Vasodilator-stimulated phosphoprotein"/>
    <property type="match status" value="1"/>
</dbReference>
<dbReference type="InterPro" id="IPR039008">
    <property type="entry name" value="IF_rod_dom"/>
</dbReference>
<dbReference type="InterPro" id="IPR032444">
    <property type="entry name" value="Keratin_2_head"/>
</dbReference>
<dbReference type="InterPro" id="IPR003054">
    <property type="entry name" value="Keratin_II"/>
</dbReference>
<dbReference type="PANTHER" id="PTHR45616">
    <property type="entry name" value="GATA-TYPE DOMAIN-CONTAINING PROTEIN"/>
    <property type="match status" value="1"/>
</dbReference>
<dbReference type="PANTHER" id="PTHR45616:SF24">
    <property type="entry name" value="KERATIN, TYPE II CYTOSKELETAL 1B"/>
    <property type="match status" value="1"/>
</dbReference>
<dbReference type="Pfam" id="PF00038">
    <property type="entry name" value="Filament"/>
    <property type="match status" value="1"/>
</dbReference>
<dbReference type="Pfam" id="PF16208">
    <property type="entry name" value="Keratin_2_head"/>
    <property type="match status" value="1"/>
</dbReference>
<dbReference type="PRINTS" id="PR01276">
    <property type="entry name" value="TYPE2KERATIN"/>
</dbReference>
<dbReference type="SMART" id="SM01391">
    <property type="entry name" value="Filament"/>
    <property type="match status" value="1"/>
</dbReference>
<dbReference type="SUPFAM" id="SSF64593">
    <property type="entry name" value="Intermediate filament protein, coiled coil region"/>
    <property type="match status" value="2"/>
</dbReference>
<dbReference type="PROSITE" id="PS51842">
    <property type="entry name" value="IF_ROD_2"/>
    <property type="match status" value="1"/>
</dbReference>
<feature type="chain" id="PRO_0000063713" description="Keratin, type II cytoskeletal 1b">
    <location>
        <begin position="1"/>
        <end position="519"/>
    </location>
</feature>
<feature type="domain" description="IF rod" evidence="2">
    <location>
        <begin position="167"/>
        <end position="480"/>
    </location>
</feature>
<feature type="region of interest" description="Head">
    <location>
        <begin position="1"/>
        <end position="166"/>
    </location>
</feature>
<feature type="region of interest" description="Coil 1A">
    <location>
        <begin position="167"/>
        <end position="202"/>
    </location>
</feature>
<feature type="region of interest" description="Linker 1">
    <location>
        <begin position="203"/>
        <end position="221"/>
    </location>
</feature>
<feature type="region of interest" description="Coil 1B">
    <location>
        <begin position="222"/>
        <end position="313"/>
    </location>
</feature>
<feature type="region of interest" description="Linker 12">
    <location>
        <begin position="314"/>
        <end position="337"/>
    </location>
</feature>
<feature type="region of interest" description="Coil 2">
    <location>
        <begin position="338"/>
        <end position="476"/>
    </location>
</feature>
<feature type="region of interest" description="Tail">
    <location>
        <begin position="477"/>
        <end position="519"/>
    </location>
</feature>
<feature type="region of interest" description="Disordered" evidence="3">
    <location>
        <begin position="499"/>
        <end position="519"/>
    </location>
</feature>
<feature type="site" description="Stutter">
    <location>
        <position position="420"/>
    </location>
</feature>
<feature type="modified residue" description="Omega-N-methylarginine" evidence="1">
    <location>
        <position position="81"/>
    </location>
</feature>
<feature type="modified residue" description="Omega-N-methylarginine" evidence="1">
    <location>
        <position position="95"/>
    </location>
</feature>
<protein>
    <recommendedName>
        <fullName>Keratin, type II cytoskeletal 1b</fullName>
    </recommendedName>
    <alternativeName>
        <fullName>Cytokeratin-1B</fullName>
        <shortName>CK-1B</shortName>
    </alternativeName>
    <alternativeName>
        <fullName>Keratin-77</fullName>
        <shortName>K77</shortName>
    </alternativeName>
    <alternativeName>
        <fullName>Type-II keratin Kb39</fullName>
    </alternativeName>
</protein>
<evidence type="ECO:0000250" key="1">
    <source>
        <dbReference type="UniProtKB" id="Q6IFZ6"/>
    </source>
</evidence>
<evidence type="ECO:0000255" key="2">
    <source>
        <dbReference type="PROSITE-ProRule" id="PRU01188"/>
    </source>
</evidence>
<evidence type="ECO:0000256" key="3">
    <source>
        <dbReference type="SAM" id="MobiDB-lite"/>
    </source>
</evidence>
<evidence type="ECO:0000269" key="4">
    <source>
    </source>
</evidence>
<evidence type="ECO:0000305" key="5"/>
<evidence type="ECO:0000312" key="6">
    <source>
        <dbReference type="EMBL" id="DAA02229.1"/>
    </source>
</evidence>
<gene>
    <name type="primary">Krt77</name>
    <name type="synonym">Kb39</name>
    <name type="synonym">Krt1b</name>
</gene>
<keyword id="KW-0164">Citrullination</keyword>
<keyword id="KW-0175">Coiled coil</keyword>
<keyword id="KW-0403">Intermediate filament</keyword>
<keyword id="KW-0416">Keratin</keyword>
<keyword id="KW-0488">Methylation</keyword>
<keyword id="KW-1185">Reference proteome</keyword>
<reference evidence="5" key="1">
    <citation type="journal article" date="2004" name="Nature">
        <title>Genome sequence of the Brown Norway rat yields insights into mammalian evolution.</title>
        <authorList>
            <person name="Gibbs R.A."/>
            <person name="Weinstock G.M."/>
            <person name="Metzker M.L."/>
            <person name="Muzny D.M."/>
            <person name="Sodergren E.J."/>
            <person name="Scherer S."/>
            <person name="Scott G."/>
            <person name="Steffen D."/>
            <person name="Worley K.C."/>
            <person name="Burch P.E."/>
            <person name="Okwuonu G."/>
            <person name="Hines S."/>
            <person name="Lewis L."/>
            <person name="Deramo C."/>
            <person name="Delgado O."/>
            <person name="Dugan-Rocha S."/>
            <person name="Miner G."/>
            <person name="Morgan M."/>
            <person name="Hawes A."/>
            <person name="Gill R."/>
            <person name="Holt R.A."/>
            <person name="Adams M.D."/>
            <person name="Amanatides P.G."/>
            <person name="Baden-Tillson H."/>
            <person name="Barnstead M."/>
            <person name="Chin S."/>
            <person name="Evans C.A."/>
            <person name="Ferriera S."/>
            <person name="Fosler C."/>
            <person name="Glodek A."/>
            <person name="Gu Z."/>
            <person name="Jennings D."/>
            <person name="Kraft C.L."/>
            <person name="Nguyen T."/>
            <person name="Pfannkoch C.M."/>
            <person name="Sitter C."/>
            <person name="Sutton G.G."/>
            <person name="Venter J.C."/>
            <person name="Woodage T."/>
            <person name="Smith D."/>
            <person name="Lee H.-M."/>
            <person name="Gustafson E."/>
            <person name="Cahill P."/>
            <person name="Kana A."/>
            <person name="Doucette-Stamm L."/>
            <person name="Weinstock K."/>
            <person name="Fechtel K."/>
            <person name="Weiss R.B."/>
            <person name="Dunn D.M."/>
            <person name="Green E.D."/>
            <person name="Blakesley R.W."/>
            <person name="Bouffard G.G."/>
            <person name="De Jong P.J."/>
            <person name="Osoegawa K."/>
            <person name="Zhu B."/>
            <person name="Marra M."/>
            <person name="Schein J."/>
            <person name="Bosdet I."/>
            <person name="Fjell C."/>
            <person name="Jones S."/>
            <person name="Krzywinski M."/>
            <person name="Mathewson C."/>
            <person name="Siddiqui A."/>
            <person name="Wye N."/>
            <person name="McPherson J."/>
            <person name="Zhao S."/>
            <person name="Fraser C.M."/>
            <person name="Shetty J."/>
            <person name="Shatsman S."/>
            <person name="Geer K."/>
            <person name="Chen Y."/>
            <person name="Abramzon S."/>
            <person name="Nierman W.C."/>
            <person name="Havlak P.H."/>
            <person name="Chen R."/>
            <person name="Durbin K.J."/>
            <person name="Egan A."/>
            <person name="Ren Y."/>
            <person name="Song X.-Z."/>
            <person name="Li B."/>
            <person name="Liu Y."/>
            <person name="Qin X."/>
            <person name="Cawley S."/>
            <person name="Cooney A.J."/>
            <person name="D'Souza L.M."/>
            <person name="Martin K."/>
            <person name="Wu J.Q."/>
            <person name="Gonzalez-Garay M.L."/>
            <person name="Jackson A.R."/>
            <person name="Kalafus K.J."/>
            <person name="McLeod M.P."/>
            <person name="Milosavljevic A."/>
            <person name="Virk D."/>
            <person name="Volkov A."/>
            <person name="Wheeler D.A."/>
            <person name="Zhang Z."/>
            <person name="Bailey J.A."/>
            <person name="Eichler E.E."/>
            <person name="Tuzun E."/>
            <person name="Birney E."/>
            <person name="Mongin E."/>
            <person name="Ureta-Vidal A."/>
            <person name="Woodwark C."/>
            <person name="Zdobnov E."/>
            <person name="Bork P."/>
            <person name="Suyama M."/>
            <person name="Torrents D."/>
            <person name="Alexandersson M."/>
            <person name="Trask B.J."/>
            <person name="Young J.M."/>
            <person name="Huang H."/>
            <person name="Wang H."/>
            <person name="Xing H."/>
            <person name="Daniels S."/>
            <person name="Gietzen D."/>
            <person name="Schmidt J."/>
            <person name="Stevens K."/>
            <person name="Vitt U."/>
            <person name="Wingrove J."/>
            <person name="Camara F."/>
            <person name="Mar Alba M."/>
            <person name="Abril J.F."/>
            <person name="Guigo R."/>
            <person name="Smit A."/>
            <person name="Dubchak I."/>
            <person name="Rubin E.M."/>
            <person name="Couronne O."/>
            <person name="Poliakov A."/>
            <person name="Huebner N."/>
            <person name="Ganten D."/>
            <person name="Goesele C."/>
            <person name="Hummel O."/>
            <person name="Kreitler T."/>
            <person name="Lee Y.-A."/>
            <person name="Monti J."/>
            <person name="Schulz H."/>
            <person name="Zimdahl H."/>
            <person name="Himmelbauer H."/>
            <person name="Lehrach H."/>
            <person name="Jacob H.J."/>
            <person name="Bromberg S."/>
            <person name="Gullings-Handley J."/>
            <person name="Jensen-Seaman M.I."/>
            <person name="Kwitek A.E."/>
            <person name="Lazar J."/>
            <person name="Pasko D."/>
            <person name="Tonellato P.J."/>
            <person name="Twigger S."/>
            <person name="Ponting C.P."/>
            <person name="Duarte J.M."/>
            <person name="Rice S."/>
            <person name="Goodstadt L."/>
            <person name="Beatson S.A."/>
            <person name="Emes R.D."/>
            <person name="Winter E.E."/>
            <person name="Webber C."/>
            <person name="Brandt P."/>
            <person name="Nyakatura G."/>
            <person name="Adetobi M."/>
            <person name="Chiaromonte F."/>
            <person name="Elnitski L."/>
            <person name="Eswara P."/>
            <person name="Hardison R.C."/>
            <person name="Hou M."/>
            <person name="Kolbe D."/>
            <person name="Makova K."/>
            <person name="Miller W."/>
            <person name="Nekrutenko A."/>
            <person name="Riemer C."/>
            <person name="Schwartz S."/>
            <person name="Taylor J."/>
            <person name="Yang S."/>
            <person name="Zhang Y."/>
            <person name="Lindpaintner K."/>
            <person name="Andrews T.D."/>
            <person name="Caccamo M."/>
            <person name="Clamp M."/>
            <person name="Clarke L."/>
            <person name="Curwen V."/>
            <person name="Durbin R.M."/>
            <person name="Eyras E."/>
            <person name="Searle S.M."/>
            <person name="Cooper G.M."/>
            <person name="Batzoglou S."/>
            <person name="Brudno M."/>
            <person name="Sidow A."/>
            <person name="Stone E.A."/>
            <person name="Payseur B.A."/>
            <person name="Bourque G."/>
            <person name="Lopez-Otin C."/>
            <person name="Puente X.S."/>
            <person name="Chakrabarti K."/>
            <person name="Chatterji S."/>
            <person name="Dewey C."/>
            <person name="Pachter L."/>
            <person name="Bray N."/>
            <person name="Yap V.B."/>
            <person name="Caspi A."/>
            <person name="Tesler G."/>
            <person name="Pevzner P.A."/>
            <person name="Haussler D."/>
            <person name="Roskin K.M."/>
            <person name="Baertsch R."/>
            <person name="Clawson H."/>
            <person name="Furey T.S."/>
            <person name="Hinrichs A.S."/>
            <person name="Karolchik D."/>
            <person name="Kent W.J."/>
            <person name="Rosenbloom K.R."/>
            <person name="Trumbower H."/>
            <person name="Weirauch M."/>
            <person name="Cooper D.N."/>
            <person name="Stenson P.D."/>
            <person name="Ma B."/>
            <person name="Brent M."/>
            <person name="Arumugam M."/>
            <person name="Shteynberg D."/>
            <person name="Copley R.R."/>
            <person name="Taylor M.S."/>
            <person name="Riethman H."/>
            <person name="Mudunuri U."/>
            <person name="Peterson J."/>
            <person name="Guyer M."/>
            <person name="Felsenfeld A."/>
            <person name="Old S."/>
            <person name="Mockrin S."/>
            <person name="Collins F.S."/>
        </authorList>
    </citation>
    <scope>NUCLEOTIDE SEQUENCE [LARGE SCALE GENOMIC DNA]</scope>
    <source>
        <strain evidence="4">Brown Norway</strain>
    </source>
</reference>
<reference evidence="5 6" key="2">
    <citation type="journal article" date="2004" name="Eur. J. Cell Biol.">
        <title>Comprehensive analysis of keratin gene clusters in humans and rodents.</title>
        <authorList>
            <person name="Hesse M."/>
            <person name="Zimek A."/>
            <person name="Weber K."/>
            <person name="Magin T.M."/>
        </authorList>
    </citation>
    <scope>IDENTIFICATION</scope>
</reference>
<name>K2C1B_RAT</name>
<sequence length="519" mass="57255">MSRQFSSQSAFSSRSRRVYSTRSSSGFGGGRQILVSVGQSRRCGGDYGGGFSSRSLYSLGGSKSIFGGLVGRSASGFCQSRGAGGGFGGGFGGGRSFGGGGFGGGYGGGGRFGGGFGGGFGTSNFGLGGFGPSYPPGGIHEVTVNQSLLEPLHLEVDPEIQKIKTQEREQIKTLNNKFASFIDKVRFLEQQNQVLQTKWELLQQVNTSTRTSSLEPIFEEFINQLQRQVDVLTNEQLRQNSEIRSMQDIVEDYKNKYEDEINKRTNSENDFVVLKKDVDAAFMAKSDLQSRVDTLYGEINFLKYLFDTELSQIQTHVSDTNVILSMDNNRSLDLDSIINAVRTQYELIAQKSKDEAEALYQTKYQELQITAGKHGDDLKNSKMEISELNRNAQRLQAEIANIKKQIEQMHGSISDAEERGERALQDAKQKLQETEEALQQMKEDLARLLRDYQALLGAKLSLDVEIATYRELLEGEESRMSGALQSQVSIWALPSNEGNDLGERLHDPQSQVPVPKLGC</sequence>